<reference key="1">
    <citation type="journal article" date="2003" name="Science">
        <title>Genome of Geobacter sulfurreducens: metal reduction in subsurface environments.</title>
        <authorList>
            <person name="Methe B.A."/>
            <person name="Nelson K.E."/>
            <person name="Eisen J.A."/>
            <person name="Paulsen I.T."/>
            <person name="Nelson W.C."/>
            <person name="Heidelberg J.F."/>
            <person name="Wu D."/>
            <person name="Wu M."/>
            <person name="Ward N.L."/>
            <person name="Beanan M.J."/>
            <person name="Dodson R.J."/>
            <person name="Madupu R."/>
            <person name="Brinkac L.M."/>
            <person name="Daugherty S.C."/>
            <person name="DeBoy R.T."/>
            <person name="Durkin A.S."/>
            <person name="Gwinn M.L."/>
            <person name="Kolonay J.F."/>
            <person name="Sullivan S.A."/>
            <person name="Haft D.H."/>
            <person name="Selengut J."/>
            <person name="Davidsen T.M."/>
            <person name="Zafar N."/>
            <person name="White O."/>
            <person name="Tran B."/>
            <person name="Romero C."/>
            <person name="Forberger H.A."/>
            <person name="Weidman J.F."/>
            <person name="Khouri H.M."/>
            <person name="Feldblyum T.V."/>
            <person name="Utterback T.R."/>
            <person name="Van Aken S.E."/>
            <person name="Lovley D.R."/>
            <person name="Fraser C.M."/>
        </authorList>
    </citation>
    <scope>NUCLEOTIDE SEQUENCE [LARGE SCALE GENOMIC DNA]</scope>
    <source>
        <strain>ATCC 51573 / DSM 12127 / PCA</strain>
    </source>
</reference>
<name>SYFA_GEOSL</name>
<keyword id="KW-0030">Aminoacyl-tRNA synthetase</keyword>
<keyword id="KW-0067">ATP-binding</keyword>
<keyword id="KW-0963">Cytoplasm</keyword>
<keyword id="KW-0436">Ligase</keyword>
<keyword id="KW-0460">Magnesium</keyword>
<keyword id="KW-0479">Metal-binding</keyword>
<keyword id="KW-0547">Nucleotide-binding</keyword>
<keyword id="KW-0648">Protein biosynthesis</keyword>
<keyword id="KW-1185">Reference proteome</keyword>
<accession>Q74D00</accession>
<sequence>MKETLDQLMQSALAEIAGAASEDALQELRVRYLGKKGELTAVMKGLGSLSPEERPRMGQMVNTVKDRLETTLEETLQRVRAAAKKERLERERLDVTLPGRTSPLGTKHPISLVIEEISDIFAGLGFQVAEGPEVELDFYNFEALNFPKDHPARDMQDTFFVDDDILLRTHTSPVQVRTMLKHAPPVRIISPGTVYRCDSDATHSPMFHQIEGFMVDKGVTFGDLKGILTNFVNQFFGAGTGVRLRPSFFPFTEPSAEVDIACVMCKGQGCRVCKQSGWLEILGAGMIDPEVYRHVGYDPESISGFAFGMGIERVAMLKYGIGDLRLFFDNDVRFLQQFR</sequence>
<feature type="chain" id="PRO_0000126709" description="Phenylalanine--tRNA ligase alpha subunit">
    <location>
        <begin position="1"/>
        <end position="339"/>
    </location>
</feature>
<feature type="binding site" evidence="1">
    <location>
        <position position="253"/>
    </location>
    <ligand>
        <name>Mg(2+)</name>
        <dbReference type="ChEBI" id="CHEBI:18420"/>
        <note>shared with beta subunit</note>
    </ligand>
</feature>
<gene>
    <name evidence="1" type="primary">pheS</name>
    <name type="ordered locus">GSU1519</name>
</gene>
<evidence type="ECO:0000255" key="1">
    <source>
        <dbReference type="HAMAP-Rule" id="MF_00281"/>
    </source>
</evidence>
<comment type="catalytic activity">
    <reaction evidence="1">
        <text>tRNA(Phe) + L-phenylalanine + ATP = L-phenylalanyl-tRNA(Phe) + AMP + diphosphate + H(+)</text>
        <dbReference type="Rhea" id="RHEA:19413"/>
        <dbReference type="Rhea" id="RHEA-COMP:9668"/>
        <dbReference type="Rhea" id="RHEA-COMP:9699"/>
        <dbReference type="ChEBI" id="CHEBI:15378"/>
        <dbReference type="ChEBI" id="CHEBI:30616"/>
        <dbReference type="ChEBI" id="CHEBI:33019"/>
        <dbReference type="ChEBI" id="CHEBI:58095"/>
        <dbReference type="ChEBI" id="CHEBI:78442"/>
        <dbReference type="ChEBI" id="CHEBI:78531"/>
        <dbReference type="ChEBI" id="CHEBI:456215"/>
        <dbReference type="EC" id="6.1.1.20"/>
    </reaction>
</comment>
<comment type="cofactor">
    <cofactor evidence="1">
        <name>Mg(2+)</name>
        <dbReference type="ChEBI" id="CHEBI:18420"/>
    </cofactor>
    <text evidence="1">Binds 2 magnesium ions per tetramer.</text>
</comment>
<comment type="subunit">
    <text evidence="1">Tetramer of two alpha and two beta subunits.</text>
</comment>
<comment type="subcellular location">
    <subcellularLocation>
        <location evidence="1">Cytoplasm</location>
    </subcellularLocation>
</comment>
<comment type="similarity">
    <text evidence="1">Belongs to the class-II aminoacyl-tRNA synthetase family. Phe-tRNA synthetase alpha subunit type 1 subfamily.</text>
</comment>
<proteinExistence type="inferred from homology"/>
<organism>
    <name type="scientific">Geobacter sulfurreducens (strain ATCC 51573 / DSM 12127 / PCA)</name>
    <dbReference type="NCBI Taxonomy" id="243231"/>
    <lineage>
        <taxon>Bacteria</taxon>
        <taxon>Pseudomonadati</taxon>
        <taxon>Thermodesulfobacteriota</taxon>
        <taxon>Desulfuromonadia</taxon>
        <taxon>Geobacterales</taxon>
        <taxon>Geobacteraceae</taxon>
        <taxon>Geobacter</taxon>
    </lineage>
</organism>
<protein>
    <recommendedName>
        <fullName evidence="1">Phenylalanine--tRNA ligase alpha subunit</fullName>
        <ecNumber evidence="1">6.1.1.20</ecNumber>
    </recommendedName>
    <alternativeName>
        <fullName evidence="1">Phenylalanyl-tRNA synthetase alpha subunit</fullName>
        <shortName evidence="1">PheRS</shortName>
    </alternativeName>
</protein>
<dbReference type="EC" id="6.1.1.20" evidence="1"/>
<dbReference type="EMBL" id="AE017180">
    <property type="protein sequence ID" value="AAR34893.1"/>
    <property type="molecule type" value="Genomic_DNA"/>
</dbReference>
<dbReference type="RefSeq" id="NP_952570.1">
    <property type="nucleotide sequence ID" value="NC_002939.5"/>
</dbReference>
<dbReference type="RefSeq" id="WP_010942166.1">
    <property type="nucleotide sequence ID" value="NC_002939.5"/>
</dbReference>
<dbReference type="SMR" id="Q74D00"/>
<dbReference type="FunCoup" id="Q74D00">
    <property type="interactions" value="536"/>
</dbReference>
<dbReference type="STRING" id="243231.GSU1519"/>
<dbReference type="EnsemblBacteria" id="AAR34893">
    <property type="protein sequence ID" value="AAR34893"/>
    <property type="gene ID" value="GSU1519"/>
</dbReference>
<dbReference type="KEGG" id="gsu:GSU1519"/>
<dbReference type="PATRIC" id="fig|243231.5.peg.1561"/>
<dbReference type="eggNOG" id="COG0016">
    <property type="taxonomic scope" value="Bacteria"/>
</dbReference>
<dbReference type="HOGENOM" id="CLU_025086_0_1_7"/>
<dbReference type="InParanoid" id="Q74D00"/>
<dbReference type="OrthoDB" id="9800719at2"/>
<dbReference type="Proteomes" id="UP000000577">
    <property type="component" value="Chromosome"/>
</dbReference>
<dbReference type="GO" id="GO:0005737">
    <property type="term" value="C:cytoplasm"/>
    <property type="evidence" value="ECO:0000318"/>
    <property type="project" value="GO_Central"/>
</dbReference>
<dbReference type="GO" id="GO:0005524">
    <property type="term" value="F:ATP binding"/>
    <property type="evidence" value="ECO:0007669"/>
    <property type="project" value="UniProtKB-UniRule"/>
</dbReference>
<dbReference type="GO" id="GO:0000287">
    <property type="term" value="F:magnesium ion binding"/>
    <property type="evidence" value="ECO:0007669"/>
    <property type="project" value="UniProtKB-UniRule"/>
</dbReference>
<dbReference type="GO" id="GO:0004826">
    <property type="term" value="F:phenylalanine-tRNA ligase activity"/>
    <property type="evidence" value="ECO:0000318"/>
    <property type="project" value="GO_Central"/>
</dbReference>
<dbReference type="GO" id="GO:0000049">
    <property type="term" value="F:tRNA binding"/>
    <property type="evidence" value="ECO:0007669"/>
    <property type="project" value="InterPro"/>
</dbReference>
<dbReference type="GO" id="GO:0006432">
    <property type="term" value="P:phenylalanyl-tRNA aminoacylation"/>
    <property type="evidence" value="ECO:0000318"/>
    <property type="project" value="GO_Central"/>
</dbReference>
<dbReference type="CDD" id="cd00496">
    <property type="entry name" value="PheRS_alpha_core"/>
    <property type="match status" value="1"/>
</dbReference>
<dbReference type="FunFam" id="3.30.930.10:FF:000003">
    <property type="entry name" value="Phenylalanine--tRNA ligase alpha subunit"/>
    <property type="match status" value="1"/>
</dbReference>
<dbReference type="Gene3D" id="3.30.930.10">
    <property type="entry name" value="Bira Bifunctional Protein, Domain 2"/>
    <property type="match status" value="1"/>
</dbReference>
<dbReference type="HAMAP" id="MF_00281">
    <property type="entry name" value="Phe_tRNA_synth_alpha1"/>
    <property type="match status" value="1"/>
</dbReference>
<dbReference type="InterPro" id="IPR006195">
    <property type="entry name" value="aa-tRNA-synth_II"/>
</dbReference>
<dbReference type="InterPro" id="IPR045864">
    <property type="entry name" value="aa-tRNA-synth_II/BPL/LPL"/>
</dbReference>
<dbReference type="InterPro" id="IPR004529">
    <property type="entry name" value="Phe-tRNA-synth_IIc_asu"/>
</dbReference>
<dbReference type="InterPro" id="IPR004188">
    <property type="entry name" value="Phe-tRNA_ligase_II_N"/>
</dbReference>
<dbReference type="InterPro" id="IPR022911">
    <property type="entry name" value="Phe_tRNA_ligase_alpha1_bac"/>
</dbReference>
<dbReference type="InterPro" id="IPR002319">
    <property type="entry name" value="Phenylalanyl-tRNA_Synthase"/>
</dbReference>
<dbReference type="InterPro" id="IPR010978">
    <property type="entry name" value="tRNA-bd_arm"/>
</dbReference>
<dbReference type="NCBIfam" id="TIGR00468">
    <property type="entry name" value="pheS"/>
    <property type="match status" value="1"/>
</dbReference>
<dbReference type="PANTHER" id="PTHR11538:SF41">
    <property type="entry name" value="PHENYLALANINE--TRNA LIGASE, MITOCHONDRIAL"/>
    <property type="match status" value="1"/>
</dbReference>
<dbReference type="PANTHER" id="PTHR11538">
    <property type="entry name" value="PHENYLALANYL-TRNA SYNTHETASE"/>
    <property type="match status" value="1"/>
</dbReference>
<dbReference type="Pfam" id="PF02912">
    <property type="entry name" value="Phe_tRNA-synt_N"/>
    <property type="match status" value="1"/>
</dbReference>
<dbReference type="Pfam" id="PF01409">
    <property type="entry name" value="tRNA-synt_2d"/>
    <property type="match status" value="1"/>
</dbReference>
<dbReference type="SUPFAM" id="SSF55681">
    <property type="entry name" value="Class II aaRS and biotin synthetases"/>
    <property type="match status" value="1"/>
</dbReference>
<dbReference type="SUPFAM" id="SSF46589">
    <property type="entry name" value="tRNA-binding arm"/>
    <property type="match status" value="1"/>
</dbReference>
<dbReference type="PROSITE" id="PS50862">
    <property type="entry name" value="AA_TRNA_LIGASE_II"/>
    <property type="match status" value="1"/>
</dbReference>